<sequence>MSHIKFDYSKVLDKFVAPHEVEYMQSQVTAADELIRKXTGAGSDFLGWLDLPEKYDREEFDRILKAAEQIKSDSDVLVVIGIGGSYLGAKAAIDFLNHHFANLQTKEERKAPQILYAGNSISSTYLADLVEYVADKDFSVNVISKSGTTTEPAIAFRVFKELLVKKYGQEEANKRIYATTDRQKGAVKVEADANGWETFVVPDDIGGRFSVLTAVGLLPIAASGADIKALMEGANAARKDYTSDKISENEAYQYAAVRNILYRKGYATEILVNYEPSLQYFSEWWKQLAGESEGKDQKGIYPTSANFSTDLHSLGQFIQEGTRIMFETVVRVDKPRKNVLIPTLEEDLDGLGYLQGKDVDFVNKKATDGVLLAHTDGDVPNMYVTLPEQDAFTLGYTIYFFELAIALSGYLNAINPFDQPGVEAYKRNMFALLGKPGFEELSKELNARL</sequence>
<organism>
    <name type="scientific">Streptococcus pneumoniae serotype 19F (strain G54)</name>
    <dbReference type="NCBI Taxonomy" id="512566"/>
    <lineage>
        <taxon>Bacteria</taxon>
        <taxon>Bacillati</taxon>
        <taxon>Bacillota</taxon>
        <taxon>Bacilli</taxon>
        <taxon>Lactobacillales</taxon>
        <taxon>Streptococcaceae</taxon>
        <taxon>Streptococcus</taxon>
    </lineage>
</organism>
<comment type="function">
    <text evidence="1">Catalyzes the reversible isomerization of glucose-6-phosphate to fructose-6-phosphate.</text>
</comment>
<comment type="catalytic activity">
    <reaction evidence="1">
        <text>alpha-D-glucose 6-phosphate = beta-D-fructose 6-phosphate</text>
        <dbReference type="Rhea" id="RHEA:11816"/>
        <dbReference type="ChEBI" id="CHEBI:57634"/>
        <dbReference type="ChEBI" id="CHEBI:58225"/>
        <dbReference type="EC" id="5.3.1.9"/>
    </reaction>
</comment>
<comment type="pathway">
    <text evidence="1">Carbohydrate biosynthesis; gluconeogenesis.</text>
</comment>
<comment type="pathway">
    <text evidence="1">Carbohydrate degradation; glycolysis; D-glyceraldehyde 3-phosphate and glycerone phosphate from D-glucose: step 2/4.</text>
</comment>
<comment type="subcellular location">
    <subcellularLocation>
        <location evidence="1">Cytoplasm</location>
    </subcellularLocation>
</comment>
<comment type="similarity">
    <text evidence="1">Belongs to the GPI family.</text>
</comment>
<evidence type="ECO:0000255" key="1">
    <source>
        <dbReference type="HAMAP-Rule" id="MF_00473"/>
    </source>
</evidence>
<proteinExistence type="inferred from homology"/>
<reference key="1">
    <citation type="journal article" date="2001" name="Microb. Drug Resist.">
        <title>Annotated draft genomic sequence from a Streptococcus pneumoniae type 19F clinical isolate.</title>
        <authorList>
            <person name="Dopazo J."/>
            <person name="Mendoza A."/>
            <person name="Herrero J."/>
            <person name="Caldara F."/>
            <person name="Humbert Y."/>
            <person name="Friedli L."/>
            <person name="Guerrier M."/>
            <person name="Grand-Schenk E."/>
            <person name="Gandin C."/>
            <person name="de Francesco M."/>
            <person name="Polissi A."/>
            <person name="Buell G."/>
            <person name="Feger G."/>
            <person name="Garcia E."/>
            <person name="Peitsch M."/>
            <person name="Garcia-Bustos J.F."/>
        </authorList>
    </citation>
    <scope>NUCLEOTIDE SEQUENCE [LARGE SCALE GENOMIC DNA]</scope>
    <source>
        <strain>G54</strain>
    </source>
</reference>
<reference key="2">
    <citation type="submission" date="2008-03" db="EMBL/GenBank/DDBJ databases">
        <title>Pneumococcal beta glucoside metabolism investigated by whole genome comparison.</title>
        <authorList>
            <person name="Mulas L."/>
            <person name="Trappetti C."/>
            <person name="Hakenbeck R."/>
            <person name="Iannelli F."/>
            <person name="Pozzi G."/>
            <person name="Davidsen T.M."/>
            <person name="Tettelin H."/>
            <person name="Oggioni M."/>
        </authorList>
    </citation>
    <scope>NUCLEOTIDE SEQUENCE [LARGE SCALE GENOMIC DNA]</scope>
    <source>
        <strain>G54</strain>
    </source>
</reference>
<accession>B5E379</accession>
<dbReference type="EC" id="5.3.1.9" evidence="1"/>
<dbReference type="EMBL" id="CP001015">
    <property type="protein sequence ID" value="ACF55186.1"/>
    <property type="molecule type" value="Genomic_DNA"/>
</dbReference>
<dbReference type="KEGG" id="spx:SPG_2009"/>
<dbReference type="HOGENOM" id="CLU_037303_0_1_9"/>
<dbReference type="UniPathway" id="UPA00109">
    <property type="reaction ID" value="UER00181"/>
</dbReference>
<dbReference type="UniPathway" id="UPA00138"/>
<dbReference type="GO" id="GO:0005829">
    <property type="term" value="C:cytosol"/>
    <property type="evidence" value="ECO:0007669"/>
    <property type="project" value="TreeGrafter"/>
</dbReference>
<dbReference type="GO" id="GO:0097367">
    <property type="term" value="F:carbohydrate derivative binding"/>
    <property type="evidence" value="ECO:0007669"/>
    <property type="project" value="InterPro"/>
</dbReference>
<dbReference type="GO" id="GO:0004347">
    <property type="term" value="F:glucose-6-phosphate isomerase activity"/>
    <property type="evidence" value="ECO:0007669"/>
    <property type="project" value="UniProtKB-UniRule"/>
</dbReference>
<dbReference type="GO" id="GO:0048029">
    <property type="term" value="F:monosaccharide binding"/>
    <property type="evidence" value="ECO:0007669"/>
    <property type="project" value="TreeGrafter"/>
</dbReference>
<dbReference type="GO" id="GO:0006094">
    <property type="term" value="P:gluconeogenesis"/>
    <property type="evidence" value="ECO:0007669"/>
    <property type="project" value="UniProtKB-UniRule"/>
</dbReference>
<dbReference type="GO" id="GO:0051156">
    <property type="term" value="P:glucose 6-phosphate metabolic process"/>
    <property type="evidence" value="ECO:0007669"/>
    <property type="project" value="TreeGrafter"/>
</dbReference>
<dbReference type="GO" id="GO:0006096">
    <property type="term" value="P:glycolytic process"/>
    <property type="evidence" value="ECO:0007669"/>
    <property type="project" value="UniProtKB-UniRule"/>
</dbReference>
<dbReference type="CDD" id="cd05015">
    <property type="entry name" value="SIS_PGI_1"/>
    <property type="match status" value="1"/>
</dbReference>
<dbReference type="CDD" id="cd05016">
    <property type="entry name" value="SIS_PGI_2"/>
    <property type="match status" value="1"/>
</dbReference>
<dbReference type="FunFam" id="3.40.50.10490:FF:000015">
    <property type="entry name" value="Glucose-6-phosphate isomerase"/>
    <property type="match status" value="1"/>
</dbReference>
<dbReference type="FunFam" id="3.40.50.10490:FF:000016">
    <property type="entry name" value="Glucose-6-phosphate isomerase"/>
    <property type="match status" value="1"/>
</dbReference>
<dbReference type="Gene3D" id="3.40.50.10490">
    <property type="entry name" value="Glucose-6-phosphate isomerase like protein, domain 1"/>
    <property type="match status" value="3"/>
</dbReference>
<dbReference type="HAMAP" id="MF_00473">
    <property type="entry name" value="G6P_isomerase"/>
    <property type="match status" value="1"/>
</dbReference>
<dbReference type="InterPro" id="IPR001672">
    <property type="entry name" value="G6P_Isomerase"/>
</dbReference>
<dbReference type="InterPro" id="IPR018189">
    <property type="entry name" value="Phosphoglucose_isomerase_CS"/>
</dbReference>
<dbReference type="InterPro" id="IPR046348">
    <property type="entry name" value="SIS_dom_sf"/>
</dbReference>
<dbReference type="InterPro" id="IPR035476">
    <property type="entry name" value="SIS_PGI_1"/>
</dbReference>
<dbReference type="InterPro" id="IPR035482">
    <property type="entry name" value="SIS_PGI_2"/>
</dbReference>
<dbReference type="NCBIfam" id="NF010697">
    <property type="entry name" value="PRK14097.1"/>
    <property type="match status" value="1"/>
</dbReference>
<dbReference type="PANTHER" id="PTHR11469">
    <property type="entry name" value="GLUCOSE-6-PHOSPHATE ISOMERASE"/>
    <property type="match status" value="1"/>
</dbReference>
<dbReference type="PANTHER" id="PTHR11469:SF1">
    <property type="entry name" value="GLUCOSE-6-PHOSPHATE ISOMERASE"/>
    <property type="match status" value="1"/>
</dbReference>
<dbReference type="Pfam" id="PF00342">
    <property type="entry name" value="PGI"/>
    <property type="match status" value="1"/>
</dbReference>
<dbReference type="PRINTS" id="PR00662">
    <property type="entry name" value="G6PISOMERASE"/>
</dbReference>
<dbReference type="SUPFAM" id="SSF53697">
    <property type="entry name" value="SIS domain"/>
    <property type="match status" value="1"/>
</dbReference>
<dbReference type="PROSITE" id="PS00765">
    <property type="entry name" value="P_GLUCOSE_ISOMERASE_1"/>
    <property type="match status" value="1"/>
</dbReference>
<dbReference type="PROSITE" id="PS00174">
    <property type="entry name" value="P_GLUCOSE_ISOMERASE_2"/>
    <property type="match status" value="1"/>
</dbReference>
<dbReference type="PROSITE" id="PS51463">
    <property type="entry name" value="P_GLUCOSE_ISOMERASE_3"/>
    <property type="match status" value="1"/>
</dbReference>
<keyword id="KW-0963">Cytoplasm</keyword>
<keyword id="KW-0312">Gluconeogenesis</keyword>
<keyword id="KW-0324">Glycolysis</keyword>
<keyword id="KW-0413">Isomerase</keyword>
<feature type="chain" id="PRO_1000125765" description="Glucose-6-phosphate isomerase">
    <location>
        <begin position="1"/>
        <end position="449"/>
    </location>
</feature>
<feature type="active site" description="Proton donor" evidence="1">
    <location>
        <position position="291"/>
    </location>
</feature>
<feature type="active site" evidence="1">
    <location>
        <position position="312"/>
    </location>
</feature>
<feature type="active site" evidence="1">
    <location>
        <position position="426"/>
    </location>
</feature>
<protein>
    <recommendedName>
        <fullName evidence="1">Glucose-6-phosphate isomerase</fullName>
        <shortName evidence="1">GPI</shortName>
        <ecNumber evidence="1">5.3.1.9</ecNumber>
    </recommendedName>
    <alternativeName>
        <fullName evidence="1">Phosphoglucose isomerase</fullName>
        <shortName evidence="1">PGI</shortName>
    </alternativeName>
    <alternativeName>
        <fullName evidence="1">Phosphohexose isomerase</fullName>
        <shortName evidence="1">PHI</shortName>
    </alternativeName>
</protein>
<gene>
    <name evidence="1" type="primary">pgi</name>
    <name type="ordered locus">SPG_2009</name>
</gene>
<name>G6PI_STRP4</name>